<sequence>MLLALAQWLQGDASFLRLFTYLTFRAVMATITALGIGLVCGPWVIRKLTQMKVGQAVRKDGPQSHLVKSGTPTMGGVLILIGIAVATLLWGDLTNRFIWIVMLVTFGFGVIGWVDDYRKVVHKDPRGMSSREKYFWQSVIGLFAAVYLAFSVSEANNVRVLDLFMAWVRSGLSMGLPARADLMLPFLKSISYPLGVWGFIVLTYFVIVGASNAVNLTDGLDGLVIMPVVLVGASLGVFAYVMGSSVYSKYLLFPHIPGAGELLIFCSAMGGAGLAFLWYNTHPAQVFMGDVGALALGGALGTVAVIVRQEIVLFIMGGIFVAETLSVMLQVSWFKYTKKRYGEGRRLLKMAPLHHHFELSGWKETQVVVRFWIITLMLCLFGLSTLKLR</sequence>
<keyword id="KW-0131">Cell cycle</keyword>
<keyword id="KW-0132">Cell division</keyword>
<keyword id="KW-0997">Cell inner membrane</keyword>
<keyword id="KW-1003">Cell membrane</keyword>
<keyword id="KW-0133">Cell shape</keyword>
<keyword id="KW-0961">Cell wall biogenesis/degradation</keyword>
<keyword id="KW-0460">Magnesium</keyword>
<keyword id="KW-0472">Membrane</keyword>
<keyword id="KW-0479">Metal-binding</keyword>
<keyword id="KW-0573">Peptidoglycan synthesis</keyword>
<keyword id="KW-0808">Transferase</keyword>
<keyword id="KW-0812">Transmembrane</keyword>
<keyword id="KW-1133">Transmembrane helix</keyword>
<accession>A4JB91</accession>
<comment type="function">
    <text evidence="1">Catalyzes the initial step of the lipid cycle reactions in the biosynthesis of the cell wall peptidoglycan: transfers peptidoglycan precursor phospho-MurNAc-pentapeptide from UDP-MurNAc-pentapeptide onto the lipid carrier undecaprenyl phosphate, yielding undecaprenyl-pyrophosphoryl-MurNAc-pentapeptide, known as lipid I.</text>
</comment>
<comment type="catalytic activity">
    <reaction evidence="1">
        <text>UDP-N-acetyl-alpha-D-muramoyl-L-alanyl-gamma-D-glutamyl-meso-2,6-diaminopimeloyl-D-alanyl-D-alanine + di-trans,octa-cis-undecaprenyl phosphate = di-trans,octa-cis-undecaprenyl diphospho-N-acetyl-alpha-D-muramoyl-L-alanyl-D-glutamyl-meso-2,6-diaminopimeloyl-D-alanyl-D-alanine + UMP</text>
        <dbReference type="Rhea" id="RHEA:28386"/>
        <dbReference type="ChEBI" id="CHEBI:57865"/>
        <dbReference type="ChEBI" id="CHEBI:60392"/>
        <dbReference type="ChEBI" id="CHEBI:61386"/>
        <dbReference type="ChEBI" id="CHEBI:61387"/>
        <dbReference type="EC" id="2.7.8.13"/>
    </reaction>
</comment>
<comment type="cofactor">
    <cofactor evidence="1">
        <name>Mg(2+)</name>
        <dbReference type="ChEBI" id="CHEBI:18420"/>
    </cofactor>
</comment>
<comment type="pathway">
    <text evidence="1">Cell wall biogenesis; peptidoglycan biosynthesis.</text>
</comment>
<comment type="subcellular location">
    <subcellularLocation>
        <location evidence="1">Cell inner membrane</location>
        <topology evidence="1">Multi-pass membrane protein</topology>
    </subcellularLocation>
</comment>
<comment type="similarity">
    <text evidence="1">Belongs to the glycosyltransferase 4 family. MraY subfamily.</text>
</comment>
<proteinExistence type="inferred from homology"/>
<name>MRAY_BURVG</name>
<dbReference type="EC" id="2.7.8.13" evidence="1"/>
<dbReference type="EMBL" id="CP000614">
    <property type="protein sequence ID" value="ABO53544.1"/>
    <property type="molecule type" value="Genomic_DNA"/>
</dbReference>
<dbReference type="SMR" id="A4JB91"/>
<dbReference type="KEGG" id="bvi:Bcep1808_0532"/>
<dbReference type="eggNOG" id="COG0472">
    <property type="taxonomic scope" value="Bacteria"/>
</dbReference>
<dbReference type="HOGENOM" id="CLU_023982_0_0_4"/>
<dbReference type="UniPathway" id="UPA00219"/>
<dbReference type="Proteomes" id="UP000002287">
    <property type="component" value="Chromosome 1"/>
</dbReference>
<dbReference type="GO" id="GO:0005886">
    <property type="term" value="C:plasma membrane"/>
    <property type="evidence" value="ECO:0007669"/>
    <property type="project" value="UniProtKB-SubCell"/>
</dbReference>
<dbReference type="GO" id="GO:0046872">
    <property type="term" value="F:metal ion binding"/>
    <property type="evidence" value="ECO:0007669"/>
    <property type="project" value="UniProtKB-KW"/>
</dbReference>
<dbReference type="GO" id="GO:0008963">
    <property type="term" value="F:phospho-N-acetylmuramoyl-pentapeptide-transferase activity"/>
    <property type="evidence" value="ECO:0007669"/>
    <property type="project" value="UniProtKB-UniRule"/>
</dbReference>
<dbReference type="GO" id="GO:0051992">
    <property type="term" value="F:UDP-N-acetylmuramoyl-L-alanyl-D-glutamyl-meso-2,6-diaminopimelyl-D-alanyl-D-alanine:undecaprenyl-phosphate transferase activity"/>
    <property type="evidence" value="ECO:0007669"/>
    <property type="project" value="RHEA"/>
</dbReference>
<dbReference type="GO" id="GO:0051301">
    <property type="term" value="P:cell division"/>
    <property type="evidence" value="ECO:0007669"/>
    <property type="project" value="UniProtKB-KW"/>
</dbReference>
<dbReference type="GO" id="GO:0071555">
    <property type="term" value="P:cell wall organization"/>
    <property type="evidence" value="ECO:0007669"/>
    <property type="project" value="UniProtKB-KW"/>
</dbReference>
<dbReference type="GO" id="GO:0009252">
    <property type="term" value="P:peptidoglycan biosynthetic process"/>
    <property type="evidence" value="ECO:0007669"/>
    <property type="project" value="UniProtKB-UniRule"/>
</dbReference>
<dbReference type="GO" id="GO:0008360">
    <property type="term" value="P:regulation of cell shape"/>
    <property type="evidence" value="ECO:0007669"/>
    <property type="project" value="UniProtKB-KW"/>
</dbReference>
<dbReference type="CDD" id="cd06852">
    <property type="entry name" value="GT_MraY"/>
    <property type="match status" value="1"/>
</dbReference>
<dbReference type="HAMAP" id="MF_00038">
    <property type="entry name" value="MraY"/>
    <property type="match status" value="1"/>
</dbReference>
<dbReference type="InterPro" id="IPR000715">
    <property type="entry name" value="Glycosyl_transferase_4"/>
</dbReference>
<dbReference type="InterPro" id="IPR003524">
    <property type="entry name" value="PNAcMuramoyl-5peptid_Trfase"/>
</dbReference>
<dbReference type="InterPro" id="IPR018480">
    <property type="entry name" value="PNAcMuramoyl-5peptid_Trfase_CS"/>
</dbReference>
<dbReference type="NCBIfam" id="TIGR00445">
    <property type="entry name" value="mraY"/>
    <property type="match status" value="1"/>
</dbReference>
<dbReference type="PANTHER" id="PTHR22926">
    <property type="entry name" value="PHOSPHO-N-ACETYLMURAMOYL-PENTAPEPTIDE-TRANSFERASE"/>
    <property type="match status" value="1"/>
</dbReference>
<dbReference type="PANTHER" id="PTHR22926:SF5">
    <property type="entry name" value="PHOSPHO-N-ACETYLMURAMOYL-PENTAPEPTIDE-TRANSFERASE HOMOLOG"/>
    <property type="match status" value="1"/>
</dbReference>
<dbReference type="Pfam" id="PF00953">
    <property type="entry name" value="Glycos_transf_4"/>
    <property type="match status" value="1"/>
</dbReference>
<dbReference type="Pfam" id="PF10555">
    <property type="entry name" value="MraY_sig1"/>
    <property type="match status" value="1"/>
</dbReference>
<dbReference type="PROSITE" id="PS01347">
    <property type="entry name" value="MRAY_1"/>
    <property type="match status" value="1"/>
</dbReference>
<dbReference type="PROSITE" id="PS01348">
    <property type="entry name" value="MRAY_2"/>
    <property type="match status" value="1"/>
</dbReference>
<organism>
    <name type="scientific">Burkholderia vietnamiensis (strain G4 / LMG 22486)</name>
    <name type="common">Burkholderia cepacia (strain R1808)</name>
    <dbReference type="NCBI Taxonomy" id="269482"/>
    <lineage>
        <taxon>Bacteria</taxon>
        <taxon>Pseudomonadati</taxon>
        <taxon>Pseudomonadota</taxon>
        <taxon>Betaproteobacteria</taxon>
        <taxon>Burkholderiales</taxon>
        <taxon>Burkholderiaceae</taxon>
        <taxon>Burkholderia</taxon>
        <taxon>Burkholderia cepacia complex</taxon>
    </lineage>
</organism>
<reference key="1">
    <citation type="submission" date="2007-03" db="EMBL/GenBank/DDBJ databases">
        <title>Complete sequence of chromosome 1 of Burkholderia vietnamiensis G4.</title>
        <authorList>
            <consortium name="US DOE Joint Genome Institute"/>
            <person name="Copeland A."/>
            <person name="Lucas S."/>
            <person name="Lapidus A."/>
            <person name="Barry K."/>
            <person name="Detter J.C."/>
            <person name="Glavina del Rio T."/>
            <person name="Hammon N."/>
            <person name="Israni S."/>
            <person name="Dalin E."/>
            <person name="Tice H."/>
            <person name="Pitluck S."/>
            <person name="Chain P."/>
            <person name="Malfatti S."/>
            <person name="Shin M."/>
            <person name="Vergez L."/>
            <person name="Schmutz J."/>
            <person name="Larimer F."/>
            <person name="Land M."/>
            <person name="Hauser L."/>
            <person name="Kyrpides N."/>
            <person name="Tiedje J."/>
            <person name="Richardson P."/>
        </authorList>
    </citation>
    <scope>NUCLEOTIDE SEQUENCE [LARGE SCALE GENOMIC DNA]</scope>
    <source>
        <strain>G4 / LMG 22486</strain>
    </source>
</reference>
<gene>
    <name evidence="1" type="primary">mraY</name>
    <name type="ordered locus">Bcep1808_0532</name>
</gene>
<protein>
    <recommendedName>
        <fullName evidence="1">Phospho-N-acetylmuramoyl-pentapeptide-transferase</fullName>
        <ecNumber evidence="1">2.7.8.13</ecNumber>
    </recommendedName>
    <alternativeName>
        <fullName evidence="1">UDP-MurNAc-pentapeptide phosphotransferase</fullName>
    </alternativeName>
</protein>
<feature type="chain" id="PRO_1000002952" description="Phospho-N-acetylmuramoyl-pentapeptide-transferase">
    <location>
        <begin position="1"/>
        <end position="389"/>
    </location>
</feature>
<feature type="transmembrane region" description="Helical" evidence="1">
    <location>
        <begin position="25"/>
        <end position="45"/>
    </location>
</feature>
<feature type="transmembrane region" description="Helical" evidence="1">
    <location>
        <begin position="73"/>
        <end position="93"/>
    </location>
</feature>
<feature type="transmembrane region" description="Helical" evidence="1">
    <location>
        <begin position="97"/>
        <end position="117"/>
    </location>
</feature>
<feature type="transmembrane region" description="Helical" evidence="1">
    <location>
        <begin position="135"/>
        <end position="155"/>
    </location>
</feature>
<feature type="transmembrane region" description="Helical" evidence="1">
    <location>
        <begin position="190"/>
        <end position="210"/>
    </location>
</feature>
<feature type="transmembrane region" description="Helical" evidence="1">
    <location>
        <begin position="222"/>
        <end position="242"/>
    </location>
</feature>
<feature type="transmembrane region" description="Helical" evidence="1">
    <location>
        <begin position="258"/>
        <end position="278"/>
    </location>
</feature>
<feature type="transmembrane region" description="Helical" evidence="1">
    <location>
        <begin position="286"/>
        <end position="306"/>
    </location>
</feature>
<feature type="transmembrane region" description="Helical" evidence="1">
    <location>
        <begin position="311"/>
        <end position="331"/>
    </location>
</feature>
<feature type="transmembrane region" description="Helical" evidence="1">
    <location>
        <begin position="366"/>
        <end position="386"/>
    </location>
</feature>
<evidence type="ECO:0000255" key="1">
    <source>
        <dbReference type="HAMAP-Rule" id="MF_00038"/>
    </source>
</evidence>